<evidence type="ECO:0000250" key="1"/>
<evidence type="ECO:0000255" key="2"/>
<evidence type="ECO:0000269" key="3">
    <source>
    </source>
</evidence>
<evidence type="ECO:0000269" key="4">
    <source>
    </source>
</evidence>
<evidence type="ECO:0000305" key="5"/>
<proteinExistence type="evidence at protein level"/>
<feature type="chain" id="PRO_0000202823" description="Non-classical export protein 2 homolog 1">
    <location>
        <begin position="1"/>
        <end position="174"/>
    </location>
</feature>
<feature type="topological domain" description="Cytoplasmic" evidence="2">
    <location>
        <begin position="1"/>
        <end position="7"/>
    </location>
</feature>
<feature type="transmembrane region" description="Helical" evidence="2">
    <location>
        <begin position="8"/>
        <end position="28"/>
    </location>
</feature>
<feature type="topological domain" description="Extracellular" evidence="2">
    <location>
        <begin position="29"/>
        <end position="41"/>
    </location>
</feature>
<feature type="transmembrane region" description="Helical" evidence="2">
    <location>
        <begin position="42"/>
        <end position="62"/>
    </location>
</feature>
<feature type="topological domain" description="Cytoplasmic" evidence="2">
    <location>
        <begin position="63"/>
        <end position="69"/>
    </location>
</feature>
<feature type="transmembrane region" description="Helical" evidence="2">
    <location>
        <begin position="70"/>
        <end position="90"/>
    </location>
</feature>
<feature type="topological domain" description="Extracellular" evidence="2">
    <location>
        <begin position="91"/>
        <end position="122"/>
    </location>
</feature>
<feature type="transmembrane region" description="Helical" evidence="2">
    <location>
        <begin position="123"/>
        <end position="143"/>
    </location>
</feature>
<feature type="topological domain" description="Cytoplasmic" evidence="2">
    <location>
        <begin position="144"/>
        <end position="174"/>
    </location>
</feature>
<organism>
    <name type="scientific">Saccharomyces cerevisiae (strain ATCC 204508 / S288c)</name>
    <name type="common">Baker's yeast</name>
    <dbReference type="NCBI Taxonomy" id="559292"/>
    <lineage>
        <taxon>Eukaryota</taxon>
        <taxon>Fungi</taxon>
        <taxon>Dikarya</taxon>
        <taxon>Ascomycota</taxon>
        <taxon>Saccharomycotina</taxon>
        <taxon>Saccharomycetes</taxon>
        <taxon>Saccharomycetales</taxon>
        <taxon>Saccharomycetaceae</taxon>
        <taxon>Saccharomyces</taxon>
    </lineage>
</organism>
<gene>
    <name type="primary">FHN1</name>
    <name type="ordered locus">YGR131W</name>
</gene>
<name>FHN1_YEAST</name>
<protein>
    <recommendedName>
        <fullName>Non-classical export protein 2 homolog 1</fullName>
    </recommendedName>
    <alternativeName>
        <fullName>Functional homolog of NCE102</fullName>
    </alternativeName>
</protein>
<reference key="1">
    <citation type="journal article" date="1997" name="Nature">
        <title>The nucleotide sequence of Saccharomyces cerevisiae chromosome VII.</title>
        <authorList>
            <person name="Tettelin H."/>
            <person name="Agostoni-Carbone M.L."/>
            <person name="Albermann K."/>
            <person name="Albers M."/>
            <person name="Arroyo J."/>
            <person name="Backes U."/>
            <person name="Barreiros T."/>
            <person name="Bertani I."/>
            <person name="Bjourson A.J."/>
            <person name="Brueckner M."/>
            <person name="Bruschi C.V."/>
            <person name="Carignani G."/>
            <person name="Castagnoli L."/>
            <person name="Cerdan E."/>
            <person name="Clemente M.L."/>
            <person name="Coblenz A."/>
            <person name="Coglievina M."/>
            <person name="Coissac E."/>
            <person name="Defoor E."/>
            <person name="Del Bino S."/>
            <person name="Delius H."/>
            <person name="Delneri D."/>
            <person name="de Wergifosse P."/>
            <person name="Dujon B."/>
            <person name="Durand P."/>
            <person name="Entian K.-D."/>
            <person name="Eraso P."/>
            <person name="Escribano V."/>
            <person name="Fabiani L."/>
            <person name="Fartmann B."/>
            <person name="Feroli F."/>
            <person name="Feuermann M."/>
            <person name="Frontali L."/>
            <person name="Garcia-Gonzalez M."/>
            <person name="Garcia-Saez M.I."/>
            <person name="Goffeau A."/>
            <person name="Guerreiro P."/>
            <person name="Hani J."/>
            <person name="Hansen M."/>
            <person name="Hebling U."/>
            <person name="Hernandez K."/>
            <person name="Heumann K."/>
            <person name="Hilger F."/>
            <person name="Hofmann B."/>
            <person name="Indge K.J."/>
            <person name="James C.M."/>
            <person name="Klima R."/>
            <person name="Koetter P."/>
            <person name="Kramer B."/>
            <person name="Kramer W."/>
            <person name="Lauquin G."/>
            <person name="Leuther H."/>
            <person name="Louis E.J."/>
            <person name="Maillier E."/>
            <person name="Marconi A."/>
            <person name="Martegani E."/>
            <person name="Mazon M.J."/>
            <person name="Mazzoni C."/>
            <person name="McReynolds A.D.K."/>
            <person name="Melchioretto P."/>
            <person name="Mewes H.-W."/>
            <person name="Minenkova O."/>
            <person name="Mueller-Auer S."/>
            <person name="Nawrocki A."/>
            <person name="Netter P."/>
            <person name="Neu R."/>
            <person name="Nombela C."/>
            <person name="Oliver S.G."/>
            <person name="Panzeri L."/>
            <person name="Paoluzi S."/>
            <person name="Plevani P."/>
            <person name="Portetelle D."/>
            <person name="Portillo F."/>
            <person name="Potier S."/>
            <person name="Purnelle B."/>
            <person name="Rieger M."/>
            <person name="Riles L."/>
            <person name="Rinaldi T."/>
            <person name="Robben J."/>
            <person name="Rodrigues-Pousada C."/>
            <person name="Rodriguez-Belmonte E."/>
            <person name="Rodriguez-Torres A.M."/>
            <person name="Rose M."/>
            <person name="Ruzzi M."/>
            <person name="Saliola M."/>
            <person name="Sanchez-Perez M."/>
            <person name="Schaefer B."/>
            <person name="Schaefer M."/>
            <person name="Scharfe M."/>
            <person name="Schmidheini T."/>
            <person name="Schreer A."/>
            <person name="Skala J."/>
            <person name="Souciet J.-L."/>
            <person name="Steensma H.Y."/>
            <person name="Talla E."/>
            <person name="Thierry A."/>
            <person name="Vandenbol M."/>
            <person name="van der Aart Q.J.M."/>
            <person name="Van Dyck L."/>
            <person name="Vanoni M."/>
            <person name="Verhasselt P."/>
            <person name="Voet M."/>
            <person name="Volckaert G."/>
            <person name="Wambutt R."/>
            <person name="Watson M.D."/>
            <person name="Weber N."/>
            <person name="Wedler E."/>
            <person name="Wedler H."/>
            <person name="Wipfli P."/>
            <person name="Wolf K."/>
            <person name="Wright L.F."/>
            <person name="Zaccaria P."/>
            <person name="Zimmermann M."/>
            <person name="Zollner A."/>
            <person name="Kleine K."/>
        </authorList>
    </citation>
    <scope>NUCLEOTIDE SEQUENCE [LARGE SCALE GENOMIC DNA]</scope>
    <source>
        <strain>ATCC 204508 / S288c</strain>
    </source>
</reference>
<reference key="2">
    <citation type="journal article" date="2014" name="G3 (Bethesda)">
        <title>The reference genome sequence of Saccharomyces cerevisiae: Then and now.</title>
        <authorList>
            <person name="Engel S.R."/>
            <person name="Dietrich F.S."/>
            <person name="Fisk D.G."/>
            <person name="Binkley G."/>
            <person name="Balakrishnan R."/>
            <person name="Costanzo M.C."/>
            <person name="Dwight S.S."/>
            <person name="Hitz B.C."/>
            <person name="Karra K."/>
            <person name="Nash R.S."/>
            <person name="Weng S."/>
            <person name="Wong E.D."/>
            <person name="Lloyd P."/>
            <person name="Skrzypek M.S."/>
            <person name="Miyasato S.R."/>
            <person name="Simison M."/>
            <person name="Cherry J.M."/>
        </authorList>
    </citation>
    <scope>GENOME REANNOTATION</scope>
    <source>
        <strain>ATCC 204508 / S288c</strain>
    </source>
</reference>
<reference key="3">
    <citation type="journal article" date="2003" name="J. Biol. Chem.">
        <title>Genome-wide expression profiling of the response to polyene, pyrimidine, azole, and echinocandin antifungal agents in Saccharomyces cerevisiae.</title>
        <authorList>
            <person name="Agarwal A.K."/>
            <person name="Rogers P.D."/>
            <person name="Baerson S.R."/>
            <person name="Jacob M.R."/>
            <person name="Barker K.S."/>
            <person name="Cleary J.D."/>
            <person name="Walker L.A."/>
            <person name="Nagle D.G."/>
            <person name="Clark A.M."/>
        </authorList>
    </citation>
    <scope>INDUCTION</scope>
</reference>
<reference key="4">
    <citation type="journal article" date="2006" name="Proc. Natl. Acad. Sci. U.S.A.">
        <title>A global topology map of the Saccharomyces cerevisiae membrane proteome.</title>
        <authorList>
            <person name="Kim H."/>
            <person name="Melen K."/>
            <person name="Oesterberg M."/>
            <person name="von Heijne G."/>
        </authorList>
    </citation>
    <scope>TOPOLOGY [LARGE SCALE ANALYSIS]</scope>
    <source>
        <strain>ATCC 208353 / W303-1A</strain>
    </source>
</reference>
<reference key="5">
    <citation type="journal article" date="2010" name="Eukaryot. Cell">
        <title>C terminus of Nce102 determines the structure and function of microdomains in the Saccharomyces cerevisiae plasma membrane.</title>
        <authorList>
            <person name="Loibl M."/>
            <person name="Grossmann G."/>
            <person name="Stradalova V."/>
            <person name="Klingl A."/>
            <person name="Rachel R."/>
            <person name="Tanner W."/>
            <person name="Malinsky J."/>
            <person name="Opekarova M."/>
        </authorList>
    </citation>
    <scope>FUNCTION</scope>
</reference>
<comment type="function">
    <text evidence="4">Involved in membrane organization. Required for the formation of membrane compartments of CAN1 (MCCs), localization of CAN1 at the MCCs and subsequent invagination of the plasma membrane at the MCCs sites. Involved in eisosome organization and might act as a sensor of sphingolipids that regulates plasma membrane function. Involved in a novel pathway of export of proteins that lack a cleavable signal sequence. Non-classical export pathway also functions as an alternative clearance/detoxification pathway to eliminate damaged material, when the basic repair pathway is not sufficient.</text>
</comment>
<comment type="subcellular location">
    <subcellularLocation>
        <location evidence="1">Cell membrane</location>
        <topology evidence="1">Multi-pass membrane protein</topology>
    </subcellularLocation>
    <text evidence="1">Associates with the ergosterol-rich membrane compartment of CAN1 (MCC). Accumulates in membrane domains at eisosomes.</text>
</comment>
<comment type="induction">
    <text evidence="3">By ketoconazole. the promoter contains a sterol regulatory element motif, which has been identified as a UPC2-binding site.</text>
</comment>
<comment type="similarity">
    <text evidence="5">Belongs to the NCE102 family.</text>
</comment>
<sequence>MLSAADNLVRIINAVFLIISIGLISGLIGTQTKHSSRVNFCMFAAVYGLVTDSLYGFLANFWTSLTYPAILLVLDFLNFIFTFVAATALAVGIRCHSCKNKTYLEQNKIIQGSSSRCHQSQAAVAFFYFSCFLFLIKVTVATMGMMQNGGFGSNTGFSRRRARRQMGIPTISQV</sequence>
<accession>P53279</accession>
<accession>D6VUR3</accession>
<dbReference type="EMBL" id="Z72916">
    <property type="protein sequence ID" value="CAA97144.1"/>
    <property type="molecule type" value="Genomic_DNA"/>
</dbReference>
<dbReference type="EMBL" id="BK006941">
    <property type="protein sequence ID" value="DAA08224.1"/>
    <property type="molecule type" value="Genomic_DNA"/>
</dbReference>
<dbReference type="PIR" id="S64440">
    <property type="entry name" value="S64440"/>
</dbReference>
<dbReference type="RefSeq" id="NP_011647.1">
    <property type="nucleotide sequence ID" value="NM_001181260.1"/>
</dbReference>
<dbReference type="SMR" id="P53279"/>
<dbReference type="BioGRID" id="33379">
    <property type="interactions" value="49"/>
</dbReference>
<dbReference type="FunCoup" id="P53279">
    <property type="interactions" value="40"/>
</dbReference>
<dbReference type="IntAct" id="P53279">
    <property type="interactions" value="3"/>
</dbReference>
<dbReference type="MINT" id="P53279"/>
<dbReference type="STRING" id="4932.YGR131W"/>
<dbReference type="TCDB" id="9.A.27.1.2">
    <property type="family name" value="the non-classical protein exporter (ncpe) family"/>
</dbReference>
<dbReference type="PaxDb" id="4932-YGR131W"/>
<dbReference type="EnsemblFungi" id="YGR131W_mRNA">
    <property type="protein sequence ID" value="YGR131W"/>
    <property type="gene ID" value="YGR131W"/>
</dbReference>
<dbReference type="GeneID" id="853032"/>
<dbReference type="KEGG" id="sce:YGR131W"/>
<dbReference type="AGR" id="SGD:S000003363"/>
<dbReference type="SGD" id="S000003363">
    <property type="gene designation" value="FHN1"/>
</dbReference>
<dbReference type="VEuPathDB" id="FungiDB:YGR131W"/>
<dbReference type="eggNOG" id="ENOG502RZW2">
    <property type="taxonomic scope" value="Eukaryota"/>
</dbReference>
<dbReference type="GeneTree" id="ENSGT00940000176512"/>
<dbReference type="HOGENOM" id="CLU_098356_1_0_1"/>
<dbReference type="InParanoid" id="P53279"/>
<dbReference type="OMA" id="RARRQMG"/>
<dbReference type="OrthoDB" id="5423111at2759"/>
<dbReference type="BioCyc" id="YEAST:G3O-30837-MONOMER"/>
<dbReference type="BioGRID-ORCS" id="853032">
    <property type="hits" value="0 hits in 10 CRISPR screens"/>
</dbReference>
<dbReference type="PRO" id="PR:P53279"/>
<dbReference type="Proteomes" id="UP000002311">
    <property type="component" value="Chromosome VII"/>
</dbReference>
<dbReference type="RNAct" id="P53279">
    <property type="molecule type" value="protein"/>
</dbReference>
<dbReference type="GO" id="GO:0071944">
    <property type="term" value="C:cell periphery"/>
    <property type="evidence" value="ECO:0007005"/>
    <property type="project" value="SGD"/>
</dbReference>
<dbReference type="GO" id="GO:0032126">
    <property type="term" value="C:eisosome"/>
    <property type="evidence" value="ECO:0000318"/>
    <property type="project" value="GO_Central"/>
</dbReference>
<dbReference type="GO" id="GO:0005886">
    <property type="term" value="C:plasma membrane"/>
    <property type="evidence" value="ECO:0000318"/>
    <property type="project" value="GO_Central"/>
</dbReference>
<dbReference type="GO" id="GO:0070941">
    <property type="term" value="P:eisosome assembly"/>
    <property type="evidence" value="ECO:0000318"/>
    <property type="project" value="GO_Central"/>
</dbReference>
<dbReference type="GO" id="GO:0072659">
    <property type="term" value="P:protein localization to plasma membrane"/>
    <property type="evidence" value="ECO:0000315"/>
    <property type="project" value="SGD"/>
</dbReference>
<dbReference type="GO" id="GO:0015031">
    <property type="term" value="P:protein transport"/>
    <property type="evidence" value="ECO:0007669"/>
    <property type="project" value="UniProtKB-KW"/>
</dbReference>
<dbReference type="InterPro" id="IPR008253">
    <property type="entry name" value="Marvel"/>
</dbReference>
<dbReference type="InterPro" id="IPR052649">
    <property type="entry name" value="NCE102-like"/>
</dbReference>
<dbReference type="PANTHER" id="PTHR28165">
    <property type="entry name" value="NON-CLASSICAL EXPORT PROTEIN 2-RELATED"/>
    <property type="match status" value="1"/>
</dbReference>
<dbReference type="PANTHER" id="PTHR28165:SF1">
    <property type="entry name" value="NON-CLASSICAL EXPORT PROTEIN 2-RELATED"/>
    <property type="match status" value="1"/>
</dbReference>
<dbReference type="Pfam" id="PF01284">
    <property type="entry name" value="MARVEL"/>
    <property type="match status" value="1"/>
</dbReference>
<keyword id="KW-1003">Cell membrane</keyword>
<keyword id="KW-0472">Membrane</keyword>
<keyword id="KW-0653">Protein transport</keyword>
<keyword id="KW-1185">Reference proteome</keyword>
<keyword id="KW-0812">Transmembrane</keyword>
<keyword id="KW-1133">Transmembrane helix</keyword>
<keyword id="KW-0813">Transport</keyword>